<organism>
    <name type="scientific">Pseudomonas fluorescens (strain Pf0-1)</name>
    <dbReference type="NCBI Taxonomy" id="205922"/>
    <lineage>
        <taxon>Bacteria</taxon>
        <taxon>Pseudomonadati</taxon>
        <taxon>Pseudomonadota</taxon>
        <taxon>Gammaproteobacteria</taxon>
        <taxon>Pseudomonadales</taxon>
        <taxon>Pseudomonadaceae</taxon>
        <taxon>Pseudomonas</taxon>
    </lineage>
</organism>
<feature type="chain" id="PRO_0000346236" description="D-ribose pyranase">
    <location>
        <begin position="1"/>
        <end position="134"/>
    </location>
</feature>
<feature type="active site" description="Proton donor" evidence="1">
    <location>
        <position position="20"/>
    </location>
</feature>
<feature type="binding site" evidence="1">
    <location>
        <position position="28"/>
    </location>
    <ligand>
        <name>substrate</name>
    </ligand>
</feature>
<feature type="binding site" evidence="1">
    <location>
        <position position="101"/>
    </location>
    <ligand>
        <name>substrate</name>
    </ligand>
</feature>
<feature type="binding site" evidence="1">
    <location>
        <begin position="123"/>
        <end position="125"/>
    </location>
    <ligand>
        <name>substrate</name>
    </ligand>
</feature>
<protein>
    <recommendedName>
        <fullName evidence="1">D-ribose pyranase</fullName>
        <ecNumber evidence="1">5.4.99.62</ecNumber>
    </recommendedName>
</protein>
<accession>Q3KEY9</accession>
<keyword id="KW-0119">Carbohydrate metabolism</keyword>
<keyword id="KW-0963">Cytoplasm</keyword>
<keyword id="KW-0413">Isomerase</keyword>
<gene>
    <name evidence="1" type="primary">rbsD</name>
    <name type="ordered locus">Pfl01_1924</name>
</gene>
<dbReference type="EC" id="5.4.99.62" evidence="1"/>
<dbReference type="EMBL" id="CP000094">
    <property type="protein sequence ID" value="ABA73667.1"/>
    <property type="molecule type" value="Genomic_DNA"/>
</dbReference>
<dbReference type="RefSeq" id="WP_011333380.1">
    <property type="nucleotide sequence ID" value="NC_007492.2"/>
</dbReference>
<dbReference type="SMR" id="Q3KEY9"/>
<dbReference type="KEGG" id="pfo:Pfl01_1924"/>
<dbReference type="eggNOG" id="COG1869">
    <property type="taxonomic scope" value="Bacteria"/>
</dbReference>
<dbReference type="HOGENOM" id="CLU_135498_0_0_6"/>
<dbReference type="UniPathway" id="UPA00916">
    <property type="reaction ID" value="UER00888"/>
</dbReference>
<dbReference type="Proteomes" id="UP000002704">
    <property type="component" value="Chromosome"/>
</dbReference>
<dbReference type="GO" id="GO:0005829">
    <property type="term" value="C:cytosol"/>
    <property type="evidence" value="ECO:0007669"/>
    <property type="project" value="TreeGrafter"/>
</dbReference>
<dbReference type="GO" id="GO:0062193">
    <property type="term" value="F:D-ribose pyranase activity"/>
    <property type="evidence" value="ECO:0007669"/>
    <property type="project" value="UniProtKB-EC"/>
</dbReference>
<dbReference type="GO" id="GO:0016872">
    <property type="term" value="F:intramolecular lyase activity"/>
    <property type="evidence" value="ECO:0007669"/>
    <property type="project" value="UniProtKB-UniRule"/>
</dbReference>
<dbReference type="GO" id="GO:0048029">
    <property type="term" value="F:monosaccharide binding"/>
    <property type="evidence" value="ECO:0007669"/>
    <property type="project" value="InterPro"/>
</dbReference>
<dbReference type="GO" id="GO:0019303">
    <property type="term" value="P:D-ribose catabolic process"/>
    <property type="evidence" value="ECO:0007669"/>
    <property type="project" value="UniProtKB-UniRule"/>
</dbReference>
<dbReference type="FunFam" id="3.40.1650.10:FF:000004">
    <property type="entry name" value="D-ribose pyranase"/>
    <property type="match status" value="1"/>
</dbReference>
<dbReference type="Gene3D" id="3.40.1650.10">
    <property type="entry name" value="RbsD-like domain"/>
    <property type="match status" value="1"/>
</dbReference>
<dbReference type="HAMAP" id="MF_01661">
    <property type="entry name" value="D_rib_pyranase"/>
    <property type="match status" value="1"/>
</dbReference>
<dbReference type="InterPro" id="IPR023064">
    <property type="entry name" value="D-ribose_pyranase"/>
</dbReference>
<dbReference type="InterPro" id="IPR023750">
    <property type="entry name" value="RbsD-like_sf"/>
</dbReference>
<dbReference type="InterPro" id="IPR007721">
    <property type="entry name" value="RbsD_FucU"/>
</dbReference>
<dbReference type="NCBIfam" id="NF008761">
    <property type="entry name" value="PRK11797.1"/>
    <property type="match status" value="1"/>
</dbReference>
<dbReference type="PANTHER" id="PTHR37831">
    <property type="entry name" value="D-RIBOSE PYRANASE"/>
    <property type="match status" value="1"/>
</dbReference>
<dbReference type="PANTHER" id="PTHR37831:SF1">
    <property type="entry name" value="D-RIBOSE PYRANASE"/>
    <property type="match status" value="1"/>
</dbReference>
<dbReference type="Pfam" id="PF05025">
    <property type="entry name" value="RbsD_FucU"/>
    <property type="match status" value="1"/>
</dbReference>
<dbReference type="SUPFAM" id="SSF102546">
    <property type="entry name" value="RbsD-like"/>
    <property type="match status" value="1"/>
</dbReference>
<proteinExistence type="inferred from homology"/>
<name>RBSD_PSEPF</name>
<reference key="1">
    <citation type="journal article" date="2009" name="Genome Biol.">
        <title>Genomic and genetic analyses of diversity and plant interactions of Pseudomonas fluorescens.</title>
        <authorList>
            <person name="Silby M.W."/>
            <person name="Cerdeno-Tarraga A.M."/>
            <person name="Vernikos G.S."/>
            <person name="Giddens S.R."/>
            <person name="Jackson R.W."/>
            <person name="Preston G.M."/>
            <person name="Zhang X.-X."/>
            <person name="Moon C.D."/>
            <person name="Gehrig S.M."/>
            <person name="Godfrey S.A.C."/>
            <person name="Knight C.G."/>
            <person name="Malone J.G."/>
            <person name="Robinson Z."/>
            <person name="Spiers A.J."/>
            <person name="Harris S."/>
            <person name="Challis G.L."/>
            <person name="Yaxley A.M."/>
            <person name="Harris D."/>
            <person name="Seeger K."/>
            <person name="Murphy L."/>
            <person name="Rutter S."/>
            <person name="Squares R."/>
            <person name="Quail M.A."/>
            <person name="Saunders E."/>
            <person name="Mavromatis K."/>
            <person name="Brettin T.S."/>
            <person name="Bentley S.D."/>
            <person name="Hothersall J."/>
            <person name="Stephens E."/>
            <person name="Thomas C.M."/>
            <person name="Parkhill J."/>
            <person name="Levy S.B."/>
            <person name="Rainey P.B."/>
            <person name="Thomson N.R."/>
        </authorList>
    </citation>
    <scope>NUCLEOTIDE SEQUENCE [LARGE SCALE GENOMIC DNA]</scope>
    <source>
        <strain>Pf0-1</strain>
    </source>
</reference>
<comment type="function">
    <text evidence="1">Catalyzes the interconversion of beta-pyran and beta-furan forms of D-ribose.</text>
</comment>
<comment type="catalytic activity">
    <reaction evidence="1">
        <text>beta-D-ribopyranose = beta-D-ribofuranose</text>
        <dbReference type="Rhea" id="RHEA:25432"/>
        <dbReference type="ChEBI" id="CHEBI:27476"/>
        <dbReference type="ChEBI" id="CHEBI:47002"/>
        <dbReference type="EC" id="5.4.99.62"/>
    </reaction>
</comment>
<comment type="pathway">
    <text evidence="1">Carbohydrate metabolism; D-ribose degradation; D-ribose 5-phosphate from beta-D-ribopyranose: step 1/2.</text>
</comment>
<comment type="subunit">
    <text evidence="1">Homodecamer.</text>
</comment>
<comment type="subcellular location">
    <subcellularLocation>
        <location evidence="1">Cytoplasm</location>
    </subcellularLocation>
</comment>
<comment type="similarity">
    <text evidence="1">Belongs to the RbsD / FucU family. RbsD subfamily.</text>
</comment>
<evidence type="ECO:0000255" key="1">
    <source>
        <dbReference type="HAMAP-Rule" id="MF_01661"/>
    </source>
</evidence>
<sequence length="134" mass="14411">MKKTPLLNVALSRLIASLGHGDVVVIGDAGLPVPPGVELIDLALTHGVPDFVSTLKVVLSEMQVESHALAKEIFDKQPTALSTLDELNDEGSLGRRDLLSHEQFKVLSRQARAIVRTGECQPYCNIVLVAGVTF</sequence>